<feature type="initiator methionine" description="Removed" evidence="2">
    <location>
        <position position="1"/>
    </location>
</feature>
<feature type="chain" id="PRO_0000359754" description="Adipose-secreted signaling protein">
    <location>
        <begin position="2"/>
        <end position="174"/>
    </location>
</feature>
<feature type="modified residue" description="N-acetylalanine" evidence="2">
    <location>
        <position position="2"/>
    </location>
</feature>
<feature type="modified residue" description="Phosphothreonine" evidence="1">
    <location>
        <position position="147"/>
    </location>
</feature>
<sequence length="174" mass="19456">MAAANRGSKPRVRSIRFAAGHDAEGSQSHVHFDEKLHDSVVMVTQESDNSFLVKVGFLKILHRYEITFTLPAVRRLSKDIREAPVHSLHLKLLSVTPIPEGYSIKCEYSAHKEGVLKEEMLLACEGDIGTCVHVTVQARVMDRHHGTPMLLDGVKCVGAELEYDSEHSDWHGFD</sequence>
<gene>
    <name evidence="1" type="primary">Adissp</name>
</gene>
<name>ADSSP_RAT</name>
<comment type="function">
    <text evidence="1">Adipocyte-secreted protein (adipokine) that acts as a key regulator for white adipose tissue (WAT) thermogenesis and glucose homeostasis at least in part through activation of protein kinase A (PKA).</text>
</comment>
<comment type="subcellular location">
    <subcellularLocation>
        <location evidence="1">Secreted</location>
    </subcellularLocation>
</comment>
<comment type="similarity">
    <text evidence="3">Belongs to the ADISSP family.</text>
</comment>
<reference key="1">
    <citation type="submission" date="2005-07" db="EMBL/GenBank/DDBJ databases">
        <authorList>
            <person name="Mural R.J."/>
            <person name="Adams M.D."/>
            <person name="Myers E.W."/>
            <person name="Smith H.O."/>
            <person name="Venter J.C."/>
        </authorList>
    </citation>
    <scope>NUCLEOTIDE SEQUENCE [LARGE SCALE GENOMIC DNA]</scope>
</reference>
<reference key="2">
    <citation type="journal article" date="2004" name="Genome Res.">
        <title>The status, quality, and expansion of the NIH full-length cDNA project: the Mammalian Gene Collection (MGC).</title>
        <authorList>
            <consortium name="The MGC Project Team"/>
        </authorList>
    </citation>
    <scope>NUCLEOTIDE SEQUENCE [LARGE SCALE MRNA]</scope>
    <source>
        <tissue>Spleen</tissue>
    </source>
</reference>
<proteinExistence type="evidence at transcript level"/>
<organism>
    <name type="scientific">Rattus norvegicus</name>
    <name type="common">Rat</name>
    <dbReference type="NCBI Taxonomy" id="10116"/>
    <lineage>
        <taxon>Eukaryota</taxon>
        <taxon>Metazoa</taxon>
        <taxon>Chordata</taxon>
        <taxon>Craniata</taxon>
        <taxon>Vertebrata</taxon>
        <taxon>Euteleostomi</taxon>
        <taxon>Mammalia</taxon>
        <taxon>Eutheria</taxon>
        <taxon>Euarchontoglires</taxon>
        <taxon>Glires</taxon>
        <taxon>Rodentia</taxon>
        <taxon>Myomorpha</taxon>
        <taxon>Muroidea</taxon>
        <taxon>Muridae</taxon>
        <taxon>Murinae</taxon>
        <taxon>Rattus</taxon>
    </lineage>
</organism>
<accession>Q4KM45</accession>
<keyword id="KW-0007">Acetylation</keyword>
<keyword id="KW-0597">Phosphoprotein</keyword>
<keyword id="KW-1185">Reference proteome</keyword>
<keyword id="KW-0964">Secreted</keyword>
<protein>
    <recommendedName>
        <fullName evidence="1">Adipose-secreted signaling protein</fullName>
    </recommendedName>
</protein>
<dbReference type="EMBL" id="CH473949">
    <property type="protein sequence ID" value="EDL80225.1"/>
    <property type="molecule type" value="Genomic_DNA"/>
</dbReference>
<dbReference type="EMBL" id="BC098814">
    <property type="protein sequence ID" value="AAH98814.1"/>
    <property type="molecule type" value="mRNA"/>
</dbReference>
<dbReference type="RefSeq" id="NP_001020862.1">
    <property type="nucleotide sequence ID" value="NM_001025691.1"/>
</dbReference>
<dbReference type="RefSeq" id="XP_017447239.1">
    <property type="nucleotide sequence ID" value="XM_017591750.1"/>
</dbReference>
<dbReference type="RefSeq" id="XP_017447240.1">
    <property type="nucleotide sequence ID" value="XM_017591751.1"/>
</dbReference>
<dbReference type="RefSeq" id="XP_017447241.1">
    <property type="nucleotide sequence ID" value="XM_017591752.1"/>
</dbReference>
<dbReference type="RefSeq" id="XP_017447242.1">
    <property type="nucleotide sequence ID" value="XM_017591753.3"/>
</dbReference>
<dbReference type="RefSeq" id="XP_063139835.1">
    <property type="nucleotide sequence ID" value="XM_063283765.1"/>
</dbReference>
<dbReference type="RefSeq" id="XP_063139836.1">
    <property type="nucleotide sequence ID" value="XM_063283766.1"/>
</dbReference>
<dbReference type="RefSeq" id="XP_063139838.1">
    <property type="nucleotide sequence ID" value="XM_063283768.1"/>
</dbReference>
<dbReference type="RefSeq" id="XP_063139839.1">
    <property type="nucleotide sequence ID" value="XM_063283769.1"/>
</dbReference>
<dbReference type="RefSeq" id="XP_063139840.1">
    <property type="nucleotide sequence ID" value="XM_063283770.1"/>
</dbReference>
<dbReference type="RefSeq" id="XP_063139841.1">
    <property type="nucleotide sequence ID" value="XM_063283771.1"/>
</dbReference>
<dbReference type="RefSeq" id="XP_063139842.1">
    <property type="nucleotide sequence ID" value="XM_063283772.1"/>
</dbReference>
<dbReference type="FunCoup" id="Q4KM45">
    <property type="interactions" value="2540"/>
</dbReference>
<dbReference type="PhosphoSitePlus" id="Q4KM45"/>
<dbReference type="PaxDb" id="10116-ENSRNOP00000028859"/>
<dbReference type="Ensembl" id="ENSRNOT00000028859.7">
    <property type="protein sequence ID" value="ENSRNOP00000028859.5"/>
    <property type="gene ID" value="ENSRNOG00000021245.8"/>
</dbReference>
<dbReference type="GeneID" id="311428"/>
<dbReference type="KEGG" id="rno:311428"/>
<dbReference type="UCSC" id="RGD:1311739">
    <property type="organism name" value="rat"/>
</dbReference>
<dbReference type="AGR" id="RGD:1311739"/>
<dbReference type="CTD" id="54976"/>
<dbReference type="RGD" id="1311739">
    <property type="gene designation" value="Adissp"/>
</dbReference>
<dbReference type="eggNOG" id="ENOG502RXJD">
    <property type="taxonomic scope" value="Eukaryota"/>
</dbReference>
<dbReference type="GeneTree" id="ENSGT00390000008711"/>
<dbReference type="HOGENOM" id="CLU_094626_2_0_1"/>
<dbReference type="InParanoid" id="Q4KM45"/>
<dbReference type="OMA" id="GVRCIGM"/>
<dbReference type="OrthoDB" id="5349at9989"/>
<dbReference type="PhylomeDB" id="Q4KM45"/>
<dbReference type="TreeFam" id="TF323780"/>
<dbReference type="PRO" id="PR:Q4KM45"/>
<dbReference type="Proteomes" id="UP000002494">
    <property type="component" value="Chromosome 3"/>
</dbReference>
<dbReference type="Proteomes" id="UP000234681">
    <property type="component" value="Chromosome 3"/>
</dbReference>
<dbReference type="Bgee" id="ENSRNOG00000021245">
    <property type="expression patterns" value="Expressed in testis and 20 other cell types or tissues"/>
</dbReference>
<dbReference type="GO" id="GO:0005615">
    <property type="term" value="C:extracellular space"/>
    <property type="evidence" value="ECO:0000250"/>
    <property type="project" value="UniProtKB"/>
</dbReference>
<dbReference type="GO" id="GO:0008157">
    <property type="term" value="F:protein phosphatase 1 binding"/>
    <property type="evidence" value="ECO:0000266"/>
    <property type="project" value="RGD"/>
</dbReference>
<dbReference type="GO" id="GO:1990845">
    <property type="term" value="P:adaptive thermogenesis"/>
    <property type="evidence" value="ECO:0000250"/>
    <property type="project" value="UniProtKB"/>
</dbReference>
<dbReference type="GO" id="GO:0042593">
    <property type="term" value="P:glucose homeostasis"/>
    <property type="evidence" value="ECO:0000250"/>
    <property type="project" value="UniProtKB"/>
</dbReference>
<dbReference type="GO" id="GO:1901224">
    <property type="term" value="P:positive regulation of non-canonical NF-kappaB signal transduction"/>
    <property type="evidence" value="ECO:0000266"/>
    <property type="project" value="RGD"/>
</dbReference>
<dbReference type="GO" id="GO:0010739">
    <property type="term" value="P:positive regulation of protein kinase A signaling"/>
    <property type="evidence" value="ECO:0000250"/>
    <property type="project" value="UniProtKB"/>
</dbReference>
<dbReference type="GO" id="GO:0030511">
    <property type="term" value="P:positive regulation of transforming growth factor beta receptor signaling pathway"/>
    <property type="evidence" value="ECO:0000266"/>
    <property type="project" value="RGD"/>
</dbReference>
<dbReference type="InterPro" id="IPR026794">
    <property type="entry name" value="ADISSP"/>
</dbReference>
<dbReference type="PANTHER" id="PTHR13287">
    <property type="entry name" value="ADIPOSE-SECRETED SIGNALING PROTEIN"/>
    <property type="match status" value="1"/>
</dbReference>
<dbReference type="PANTHER" id="PTHR13287:SF2">
    <property type="entry name" value="ADIPOSE-SECRETED SIGNALING PROTEIN"/>
    <property type="match status" value="1"/>
</dbReference>
<dbReference type="Pfam" id="PF15006">
    <property type="entry name" value="DUF4517"/>
    <property type="match status" value="1"/>
</dbReference>
<evidence type="ECO:0000250" key="1">
    <source>
        <dbReference type="UniProtKB" id="Q9D1K7"/>
    </source>
</evidence>
<evidence type="ECO:0000250" key="2">
    <source>
        <dbReference type="UniProtKB" id="Q9GZN8"/>
    </source>
</evidence>
<evidence type="ECO:0000305" key="3"/>